<dbReference type="EC" id="3.6.5.3" evidence="2"/>
<dbReference type="EMBL" id="AE017321">
    <property type="protein sequence ID" value="AAW70932.1"/>
    <property type="molecule type" value="Genomic_DNA"/>
</dbReference>
<dbReference type="RefSeq" id="WP_011256542.1">
    <property type="nucleotide sequence ID" value="NC_006833.1"/>
</dbReference>
<dbReference type="SMR" id="Q5GSU2"/>
<dbReference type="STRING" id="292805.Wbm0343"/>
<dbReference type="KEGG" id="wbm:Wbm0343"/>
<dbReference type="eggNOG" id="COG0050">
    <property type="taxonomic scope" value="Bacteria"/>
</dbReference>
<dbReference type="HOGENOM" id="CLU_007265_0_0_5"/>
<dbReference type="Proteomes" id="UP000000534">
    <property type="component" value="Chromosome"/>
</dbReference>
<dbReference type="GO" id="GO:0005737">
    <property type="term" value="C:cytoplasm"/>
    <property type="evidence" value="ECO:0007669"/>
    <property type="project" value="UniProtKB-SubCell"/>
</dbReference>
<dbReference type="GO" id="GO:0005525">
    <property type="term" value="F:GTP binding"/>
    <property type="evidence" value="ECO:0007669"/>
    <property type="project" value="UniProtKB-UniRule"/>
</dbReference>
<dbReference type="GO" id="GO:0003924">
    <property type="term" value="F:GTPase activity"/>
    <property type="evidence" value="ECO:0007669"/>
    <property type="project" value="InterPro"/>
</dbReference>
<dbReference type="GO" id="GO:0097216">
    <property type="term" value="F:guanosine tetraphosphate binding"/>
    <property type="evidence" value="ECO:0007669"/>
    <property type="project" value="UniProtKB-ARBA"/>
</dbReference>
<dbReference type="GO" id="GO:0003746">
    <property type="term" value="F:translation elongation factor activity"/>
    <property type="evidence" value="ECO:0007669"/>
    <property type="project" value="UniProtKB-UniRule"/>
</dbReference>
<dbReference type="CDD" id="cd01884">
    <property type="entry name" value="EF_Tu"/>
    <property type="match status" value="1"/>
</dbReference>
<dbReference type="CDD" id="cd03697">
    <property type="entry name" value="EFTU_II"/>
    <property type="match status" value="1"/>
</dbReference>
<dbReference type="CDD" id="cd03707">
    <property type="entry name" value="EFTU_III"/>
    <property type="match status" value="1"/>
</dbReference>
<dbReference type="FunFam" id="2.40.30.10:FF:000001">
    <property type="entry name" value="Elongation factor Tu"/>
    <property type="match status" value="1"/>
</dbReference>
<dbReference type="FunFam" id="3.40.50.300:FF:000003">
    <property type="entry name" value="Elongation factor Tu"/>
    <property type="match status" value="1"/>
</dbReference>
<dbReference type="Gene3D" id="3.40.50.300">
    <property type="entry name" value="P-loop containing nucleotide triphosphate hydrolases"/>
    <property type="match status" value="1"/>
</dbReference>
<dbReference type="Gene3D" id="2.40.30.10">
    <property type="entry name" value="Translation factors"/>
    <property type="match status" value="2"/>
</dbReference>
<dbReference type="HAMAP" id="MF_00118_B">
    <property type="entry name" value="EF_Tu_B"/>
    <property type="match status" value="1"/>
</dbReference>
<dbReference type="InterPro" id="IPR041709">
    <property type="entry name" value="EF-Tu_GTP-bd"/>
</dbReference>
<dbReference type="InterPro" id="IPR050055">
    <property type="entry name" value="EF-Tu_GTPase"/>
</dbReference>
<dbReference type="InterPro" id="IPR004161">
    <property type="entry name" value="EFTu-like_2"/>
</dbReference>
<dbReference type="InterPro" id="IPR033720">
    <property type="entry name" value="EFTU_2"/>
</dbReference>
<dbReference type="InterPro" id="IPR031157">
    <property type="entry name" value="G_TR_CS"/>
</dbReference>
<dbReference type="InterPro" id="IPR027417">
    <property type="entry name" value="P-loop_NTPase"/>
</dbReference>
<dbReference type="InterPro" id="IPR005225">
    <property type="entry name" value="Small_GTP-bd"/>
</dbReference>
<dbReference type="InterPro" id="IPR000795">
    <property type="entry name" value="T_Tr_GTP-bd_dom"/>
</dbReference>
<dbReference type="InterPro" id="IPR009000">
    <property type="entry name" value="Transl_B-barrel_sf"/>
</dbReference>
<dbReference type="InterPro" id="IPR009001">
    <property type="entry name" value="Transl_elong_EF1A/Init_IF2_C"/>
</dbReference>
<dbReference type="InterPro" id="IPR004541">
    <property type="entry name" value="Transl_elong_EFTu/EF1A_bac/org"/>
</dbReference>
<dbReference type="InterPro" id="IPR004160">
    <property type="entry name" value="Transl_elong_EFTu/EF1A_C"/>
</dbReference>
<dbReference type="NCBIfam" id="TIGR00485">
    <property type="entry name" value="EF-Tu"/>
    <property type="match status" value="1"/>
</dbReference>
<dbReference type="NCBIfam" id="NF000766">
    <property type="entry name" value="PRK00049.1"/>
    <property type="match status" value="1"/>
</dbReference>
<dbReference type="NCBIfam" id="NF009372">
    <property type="entry name" value="PRK12735.1"/>
    <property type="match status" value="1"/>
</dbReference>
<dbReference type="NCBIfam" id="NF009373">
    <property type="entry name" value="PRK12736.1"/>
    <property type="match status" value="1"/>
</dbReference>
<dbReference type="NCBIfam" id="TIGR00231">
    <property type="entry name" value="small_GTP"/>
    <property type="match status" value="1"/>
</dbReference>
<dbReference type="PANTHER" id="PTHR43721:SF22">
    <property type="entry name" value="ELONGATION FACTOR TU, MITOCHONDRIAL"/>
    <property type="match status" value="1"/>
</dbReference>
<dbReference type="PANTHER" id="PTHR43721">
    <property type="entry name" value="ELONGATION FACTOR TU-RELATED"/>
    <property type="match status" value="1"/>
</dbReference>
<dbReference type="Pfam" id="PF00009">
    <property type="entry name" value="GTP_EFTU"/>
    <property type="match status" value="1"/>
</dbReference>
<dbReference type="Pfam" id="PF03144">
    <property type="entry name" value="GTP_EFTU_D2"/>
    <property type="match status" value="1"/>
</dbReference>
<dbReference type="Pfam" id="PF03143">
    <property type="entry name" value="GTP_EFTU_D3"/>
    <property type="match status" value="1"/>
</dbReference>
<dbReference type="PRINTS" id="PR00315">
    <property type="entry name" value="ELONGATNFCT"/>
</dbReference>
<dbReference type="SUPFAM" id="SSF50465">
    <property type="entry name" value="EF-Tu/eEF-1alpha/eIF2-gamma C-terminal domain"/>
    <property type="match status" value="1"/>
</dbReference>
<dbReference type="SUPFAM" id="SSF52540">
    <property type="entry name" value="P-loop containing nucleoside triphosphate hydrolases"/>
    <property type="match status" value="1"/>
</dbReference>
<dbReference type="SUPFAM" id="SSF50447">
    <property type="entry name" value="Translation proteins"/>
    <property type="match status" value="1"/>
</dbReference>
<dbReference type="PROSITE" id="PS00301">
    <property type="entry name" value="G_TR_1"/>
    <property type="match status" value="1"/>
</dbReference>
<dbReference type="PROSITE" id="PS51722">
    <property type="entry name" value="G_TR_2"/>
    <property type="match status" value="1"/>
</dbReference>
<sequence>MTTAVEATAQVVEAFGKPHVNVGTIGHVDHGKTTLTAAITKHYGNFVAYDQIDKAPEERKRGITIATAHVEYQTEKRHYAHVDCPGHADYVKNMIVGAAQMDAAILVVSGVDGPMPQTREHILLAKQVGVGYIVVYINKADVSDPDMIGLVEMEVRELLSKYGFPGDEVPVVIGSALKALEDDDGEYGKKSIDKLMERLDDYVEVPPRSVDLPFLLPIEDVFSISGRGTVVTGRIEKGEIKIGDEIEIIGLKATQKTTCTGVEMFKKLLEKGSAGLNVGILLRGTKREEVERGQVLAKPGTITPHRKFKAEVYILKKEEGGRHTPFFANYQPQFYLRTTDVTGSIKLLEGKEMVMPGDNVSIEVELQVPIAMDKGLRFAIREGGRTVGSGVVSEILEWV</sequence>
<proteinExistence type="inferred from homology"/>
<reference key="1">
    <citation type="journal article" date="2005" name="PLoS Biol.">
        <title>The Wolbachia genome of Brugia malayi: endosymbiont evolution within a human pathogenic nematode.</title>
        <authorList>
            <person name="Foster J."/>
            <person name="Ganatra M."/>
            <person name="Kamal I."/>
            <person name="Ware J."/>
            <person name="Makarova K."/>
            <person name="Ivanova N."/>
            <person name="Bhattacharyya A."/>
            <person name="Kapatral V."/>
            <person name="Kumar S."/>
            <person name="Posfai J."/>
            <person name="Vincze T."/>
            <person name="Ingram J."/>
            <person name="Moran L."/>
            <person name="Lapidus A."/>
            <person name="Omelchenko M."/>
            <person name="Kyrpides N."/>
            <person name="Ghedin E."/>
            <person name="Wang S."/>
            <person name="Goltsman E."/>
            <person name="Joukov V."/>
            <person name="Ostrovskaya O."/>
            <person name="Tsukerman K."/>
            <person name="Mazur M."/>
            <person name="Comb D."/>
            <person name="Koonin E."/>
            <person name="Slatko B."/>
        </authorList>
    </citation>
    <scope>NUCLEOTIDE SEQUENCE [LARGE SCALE GENOMIC DNA]</scope>
    <source>
        <strain>TRS</strain>
    </source>
</reference>
<accession>Q5GSU2</accession>
<comment type="function">
    <text evidence="2">GTP hydrolase that promotes the GTP-dependent binding of aminoacyl-tRNA to the A-site of ribosomes during protein biosynthesis.</text>
</comment>
<comment type="catalytic activity">
    <reaction evidence="2">
        <text>GTP + H2O = GDP + phosphate + H(+)</text>
        <dbReference type="Rhea" id="RHEA:19669"/>
        <dbReference type="ChEBI" id="CHEBI:15377"/>
        <dbReference type="ChEBI" id="CHEBI:15378"/>
        <dbReference type="ChEBI" id="CHEBI:37565"/>
        <dbReference type="ChEBI" id="CHEBI:43474"/>
        <dbReference type="ChEBI" id="CHEBI:58189"/>
        <dbReference type="EC" id="3.6.5.3"/>
    </reaction>
    <physiologicalReaction direction="left-to-right" evidence="2">
        <dbReference type="Rhea" id="RHEA:19670"/>
    </physiologicalReaction>
</comment>
<comment type="subunit">
    <text evidence="2">Monomer.</text>
</comment>
<comment type="subcellular location">
    <subcellularLocation>
        <location evidence="2">Cytoplasm</location>
    </subcellularLocation>
</comment>
<comment type="similarity">
    <text evidence="2">Belongs to the TRAFAC class translation factor GTPase superfamily. Classic translation factor GTPase family. EF-Tu/EF-1A subfamily.</text>
</comment>
<feature type="chain" id="PRO_0000337573" description="Elongation factor Tu 1">
    <location>
        <begin position="1"/>
        <end position="399"/>
    </location>
</feature>
<feature type="domain" description="tr-type G">
    <location>
        <begin position="17"/>
        <end position="208"/>
    </location>
</feature>
<feature type="region of interest" description="G1" evidence="1">
    <location>
        <begin position="26"/>
        <end position="33"/>
    </location>
</feature>
<feature type="region of interest" description="G2" evidence="1">
    <location>
        <begin position="62"/>
        <end position="66"/>
    </location>
</feature>
<feature type="region of interest" description="G3" evidence="1">
    <location>
        <begin position="83"/>
        <end position="86"/>
    </location>
</feature>
<feature type="region of interest" description="G4" evidence="1">
    <location>
        <begin position="138"/>
        <end position="141"/>
    </location>
</feature>
<feature type="region of interest" description="G5" evidence="1">
    <location>
        <begin position="175"/>
        <end position="177"/>
    </location>
</feature>
<feature type="binding site" evidence="2">
    <location>
        <begin position="26"/>
        <end position="33"/>
    </location>
    <ligand>
        <name>GTP</name>
        <dbReference type="ChEBI" id="CHEBI:37565"/>
    </ligand>
</feature>
<feature type="binding site" evidence="2">
    <location>
        <position position="33"/>
    </location>
    <ligand>
        <name>Mg(2+)</name>
        <dbReference type="ChEBI" id="CHEBI:18420"/>
    </ligand>
</feature>
<feature type="binding site" evidence="2">
    <location>
        <begin position="83"/>
        <end position="87"/>
    </location>
    <ligand>
        <name>GTP</name>
        <dbReference type="ChEBI" id="CHEBI:37565"/>
    </ligand>
</feature>
<feature type="binding site" evidence="2">
    <location>
        <begin position="138"/>
        <end position="141"/>
    </location>
    <ligand>
        <name>GTP</name>
        <dbReference type="ChEBI" id="CHEBI:37565"/>
    </ligand>
</feature>
<keyword id="KW-0963">Cytoplasm</keyword>
<keyword id="KW-0251">Elongation factor</keyword>
<keyword id="KW-0342">GTP-binding</keyword>
<keyword id="KW-0378">Hydrolase</keyword>
<keyword id="KW-0460">Magnesium</keyword>
<keyword id="KW-0479">Metal-binding</keyword>
<keyword id="KW-0547">Nucleotide-binding</keyword>
<keyword id="KW-0648">Protein biosynthesis</keyword>
<keyword id="KW-1185">Reference proteome</keyword>
<organism>
    <name type="scientific">Wolbachia sp. subsp. Brugia malayi (strain TRS)</name>
    <dbReference type="NCBI Taxonomy" id="292805"/>
    <lineage>
        <taxon>Bacteria</taxon>
        <taxon>Pseudomonadati</taxon>
        <taxon>Pseudomonadota</taxon>
        <taxon>Alphaproteobacteria</taxon>
        <taxon>Rickettsiales</taxon>
        <taxon>Anaplasmataceae</taxon>
        <taxon>Wolbachieae</taxon>
        <taxon>Wolbachia</taxon>
    </lineage>
</organism>
<protein>
    <recommendedName>
        <fullName evidence="2">Elongation factor Tu 1</fullName>
        <shortName evidence="2">EF-Tu 1</shortName>
        <ecNumber evidence="2">3.6.5.3</ecNumber>
    </recommendedName>
</protein>
<evidence type="ECO:0000250" key="1"/>
<evidence type="ECO:0000255" key="2">
    <source>
        <dbReference type="HAMAP-Rule" id="MF_00118"/>
    </source>
</evidence>
<name>EFTU1_WOLTR</name>
<gene>
    <name evidence="2" type="primary">tuf1</name>
    <name type="ordered locus">Wbm0343</name>
</gene>